<reference key="1">
    <citation type="journal article" date="2002" name="DNA Res.">
        <title>Prediction of the coding sequences of mouse homologues of KIAA gene: I. The complete nucleotide sequences of 100 mouse KIAA-homologous cDNAs identified by screening of terminal sequences of cDNA clones randomly sampled from size-fractionated libraries.</title>
        <authorList>
            <person name="Okazaki N."/>
            <person name="Kikuno R."/>
            <person name="Ohara R."/>
            <person name="Inamoto S."/>
            <person name="Hara Y."/>
            <person name="Nagase T."/>
            <person name="Ohara O."/>
            <person name="Koga H."/>
        </authorList>
    </citation>
    <scope>NUCLEOTIDE SEQUENCE [LARGE SCALE MRNA] (ISOFORM 1)</scope>
    <source>
        <tissue>Brain</tissue>
    </source>
</reference>
<reference key="2">
    <citation type="journal article" date="2009" name="PLoS Biol.">
        <title>Lineage-specific biology revealed by a finished genome assembly of the mouse.</title>
        <authorList>
            <person name="Church D.M."/>
            <person name="Goodstadt L."/>
            <person name="Hillier L.W."/>
            <person name="Zody M.C."/>
            <person name="Goldstein S."/>
            <person name="She X."/>
            <person name="Bult C.J."/>
            <person name="Agarwala R."/>
            <person name="Cherry J.L."/>
            <person name="DiCuccio M."/>
            <person name="Hlavina W."/>
            <person name="Kapustin Y."/>
            <person name="Meric P."/>
            <person name="Maglott D."/>
            <person name="Birtle Z."/>
            <person name="Marques A.C."/>
            <person name="Graves T."/>
            <person name="Zhou S."/>
            <person name="Teague B."/>
            <person name="Potamousis K."/>
            <person name="Churas C."/>
            <person name="Place M."/>
            <person name="Herschleb J."/>
            <person name="Runnheim R."/>
            <person name="Forrest D."/>
            <person name="Amos-Landgraf J."/>
            <person name="Schwartz D.C."/>
            <person name="Cheng Z."/>
            <person name="Lindblad-Toh K."/>
            <person name="Eichler E.E."/>
            <person name="Ponting C.P."/>
        </authorList>
    </citation>
    <scope>NUCLEOTIDE SEQUENCE [LARGE SCALE GENOMIC DNA]</scope>
    <source>
        <strain>C57BL/6J</strain>
    </source>
</reference>
<reference key="3">
    <citation type="journal article" date="2004" name="Genome Res.">
        <title>The status, quality, and expansion of the NIH full-length cDNA project: the Mammalian Gene Collection (MGC).</title>
        <authorList>
            <consortium name="The MGC Project Team"/>
        </authorList>
    </citation>
    <scope>NUCLEOTIDE SEQUENCE [LARGE SCALE MRNA] (ISOFORMS 1 AND 2)</scope>
    <source>
        <strain>C57BL/6J</strain>
        <tissue>Brain</tissue>
        <tissue>Eye</tissue>
    </source>
</reference>
<reference key="4">
    <citation type="journal article" date="2005" name="Science">
        <title>The transcriptional landscape of the mammalian genome.</title>
        <authorList>
            <person name="Carninci P."/>
            <person name="Kasukawa T."/>
            <person name="Katayama S."/>
            <person name="Gough J."/>
            <person name="Frith M.C."/>
            <person name="Maeda N."/>
            <person name="Oyama R."/>
            <person name="Ravasi T."/>
            <person name="Lenhard B."/>
            <person name="Wells C."/>
            <person name="Kodzius R."/>
            <person name="Shimokawa K."/>
            <person name="Bajic V.B."/>
            <person name="Brenner S.E."/>
            <person name="Batalov S."/>
            <person name="Forrest A.R."/>
            <person name="Zavolan M."/>
            <person name="Davis M.J."/>
            <person name="Wilming L.G."/>
            <person name="Aidinis V."/>
            <person name="Allen J.E."/>
            <person name="Ambesi-Impiombato A."/>
            <person name="Apweiler R."/>
            <person name="Aturaliya R.N."/>
            <person name="Bailey T.L."/>
            <person name="Bansal M."/>
            <person name="Baxter L."/>
            <person name="Beisel K.W."/>
            <person name="Bersano T."/>
            <person name="Bono H."/>
            <person name="Chalk A.M."/>
            <person name="Chiu K.P."/>
            <person name="Choudhary V."/>
            <person name="Christoffels A."/>
            <person name="Clutterbuck D.R."/>
            <person name="Crowe M.L."/>
            <person name="Dalla E."/>
            <person name="Dalrymple B.P."/>
            <person name="de Bono B."/>
            <person name="Della Gatta G."/>
            <person name="di Bernardo D."/>
            <person name="Down T."/>
            <person name="Engstrom P."/>
            <person name="Fagiolini M."/>
            <person name="Faulkner G."/>
            <person name="Fletcher C.F."/>
            <person name="Fukushima T."/>
            <person name="Furuno M."/>
            <person name="Futaki S."/>
            <person name="Gariboldi M."/>
            <person name="Georgii-Hemming P."/>
            <person name="Gingeras T.R."/>
            <person name="Gojobori T."/>
            <person name="Green R.E."/>
            <person name="Gustincich S."/>
            <person name="Harbers M."/>
            <person name="Hayashi Y."/>
            <person name="Hensch T.K."/>
            <person name="Hirokawa N."/>
            <person name="Hill D."/>
            <person name="Huminiecki L."/>
            <person name="Iacono M."/>
            <person name="Ikeo K."/>
            <person name="Iwama A."/>
            <person name="Ishikawa T."/>
            <person name="Jakt M."/>
            <person name="Kanapin A."/>
            <person name="Katoh M."/>
            <person name="Kawasawa Y."/>
            <person name="Kelso J."/>
            <person name="Kitamura H."/>
            <person name="Kitano H."/>
            <person name="Kollias G."/>
            <person name="Krishnan S.P."/>
            <person name="Kruger A."/>
            <person name="Kummerfeld S.K."/>
            <person name="Kurochkin I.V."/>
            <person name="Lareau L.F."/>
            <person name="Lazarevic D."/>
            <person name="Lipovich L."/>
            <person name="Liu J."/>
            <person name="Liuni S."/>
            <person name="McWilliam S."/>
            <person name="Madan Babu M."/>
            <person name="Madera M."/>
            <person name="Marchionni L."/>
            <person name="Matsuda H."/>
            <person name="Matsuzawa S."/>
            <person name="Miki H."/>
            <person name="Mignone F."/>
            <person name="Miyake S."/>
            <person name="Morris K."/>
            <person name="Mottagui-Tabar S."/>
            <person name="Mulder N."/>
            <person name="Nakano N."/>
            <person name="Nakauchi H."/>
            <person name="Ng P."/>
            <person name="Nilsson R."/>
            <person name="Nishiguchi S."/>
            <person name="Nishikawa S."/>
            <person name="Nori F."/>
            <person name="Ohara O."/>
            <person name="Okazaki Y."/>
            <person name="Orlando V."/>
            <person name="Pang K.C."/>
            <person name="Pavan W.J."/>
            <person name="Pavesi G."/>
            <person name="Pesole G."/>
            <person name="Petrovsky N."/>
            <person name="Piazza S."/>
            <person name="Reed J."/>
            <person name="Reid J.F."/>
            <person name="Ring B.Z."/>
            <person name="Ringwald M."/>
            <person name="Rost B."/>
            <person name="Ruan Y."/>
            <person name="Salzberg S.L."/>
            <person name="Sandelin A."/>
            <person name="Schneider C."/>
            <person name="Schoenbach C."/>
            <person name="Sekiguchi K."/>
            <person name="Semple C.A."/>
            <person name="Seno S."/>
            <person name="Sessa L."/>
            <person name="Sheng Y."/>
            <person name="Shibata Y."/>
            <person name="Shimada H."/>
            <person name="Shimada K."/>
            <person name="Silva D."/>
            <person name="Sinclair B."/>
            <person name="Sperling S."/>
            <person name="Stupka E."/>
            <person name="Sugiura K."/>
            <person name="Sultana R."/>
            <person name="Takenaka Y."/>
            <person name="Taki K."/>
            <person name="Tammoja K."/>
            <person name="Tan S.L."/>
            <person name="Tang S."/>
            <person name="Taylor M.S."/>
            <person name="Tegner J."/>
            <person name="Teichmann S.A."/>
            <person name="Ueda H.R."/>
            <person name="van Nimwegen E."/>
            <person name="Verardo R."/>
            <person name="Wei C.L."/>
            <person name="Yagi K."/>
            <person name="Yamanishi H."/>
            <person name="Zabarovsky E."/>
            <person name="Zhu S."/>
            <person name="Zimmer A."/>
            <person name="Hide W."/>
            <person name="Bult C."/>
            <person name="Grimmond S.M."/>
            <person name="Teasdale R.D."/>
            <person name="Liu E.T."/>
            <person name="Brusic V."/>
            <person name="Quackenbush J."/>
            <person name="Wahlestedt C."/>
            <person name="Mattick J.S."/>
            <person name="Hume D.A."/>
            <person name="Kai C."/>
            <person name="Sasaki D."/>
            <person name="Tomaru Y."/>
            <person name="Fukuda S."/>
            <person name="Kanamori-Katayama M."/>
            <person name="Suzuki M."/>
            <person name="Aoki J."/>
            <person name="Arakawa T."/>
            <person name="Iida J."/>
            <person name="Imamura K."/>
            <person name="Itoh M."/>
            <person name="Kato T."/>
            <person name="Kawaji H."/>
            <person name="Kawagashira N."/>
            <person name="Kawashima T."/>
            <person name="Kojima M."/>
            <person name="Kondo S."/>
            <person name="Konno H."/>
            <person name="Nakano K."/>
            <person name="Ninomiya N."/>
            <person name="Nishio T."/>
            <person name="Okada M."/>
            <person name="Plessy C."/>
            <person name="Shibata K."/>
            <person name="Shiraki T."/>
            <person name="Suzuki S."/>
            <person name="Tagami M."/>
            <person name="Waki K."/>
            <person name="Watahiki A."/>
            <person name="Okamura-Oho Y."/>
            <person name="Suzuki H."/>
            <person name="Kawai J."/>
            <person name="Hayashizaki Y."/>
        </authorList>
    </citation>
    <scope>NUCLEOTIDE SEQUENCE [LARGE SCALE MRNA] OF 1-379 AND 943-1347 (ISOFORM 1)</scope>
    <source>
        <strain>C57BL/6J</strain>
        <tissue>Embryo</tissue>
        <tissue>Hippocampus</tissue>
        <tissue>Hypothalamus</tissue>
    </source>
</reference>
<reference key="5">
    <citation type="journal article" date="2004" name="J. Neurochem.">
        <title>Identification of a novel family of G protein-coupled receptor associated sorting proteins.</title>
        <authorList>
            <person name="Simonin F."/>
            <person name="Karcher P."/>
            <person name="Boeuf J.J.-M."/>
            <person name="Matifas A."/>
            <person name="Kieffer B.L."/>
        </authorList>
    </citation>
    <scope>TISSUE SPECIFICITY</scope>
</reference>
<reference key="6">
    <citation type="journal article" date="2010" name="Cell">
        <title>A tissue-specific atlas of mouse protein phosphorylation and expression.</title>
        <authorList>
            <person name="Huttlin E.L."/>
            <person name="Jedrychowski M.P."/>
            <person name="Elias J.E."/>
            <person name="Goswami T."/>
            <person name="Rad R."/>
            <person name="Beausoleil S.A."/>
            <person name="Villen J."/>
            <person name="Haas W."/>
            <person name="Sowa M.E."/>
            <person name="Gygi S.P."/>
        </authorList>
    </citation>
    <scope>PHOSPHORYLATION [LARGE SCALE ANALYSIS] AT SER-295; SER-619 AND SER-626</scope>
    <scope>IDENTIFICATION BY MASS SPECTROMETRY [LARGE SCALE ANALYSIS]</scope>
    <source>
        <tissue>Brain</tissue>
        <tissue>Testis</tissue>
    </source>
</reference>
<reference key="7">
    <citation type="journal article" date="2013" name="Cell">
        <title>Beclin 2 functions in autophagy, degradation of G protein-coupled receptors, and metabolism.</title>
        <authorList>
            <person name="He C."/>
            <person name="Wei Y."/>
            <person name="Sun K."/>
            <person name="Li B."/>
            <person name="Dong X."/>
            <person name="Zou Z."/>
            <person name="Liu Y."/>
            <person name="Kinch L.N."/>
            <person name="Khan S."/>
            <person name="Sinha S."/>
            <person name="Xavier R.J."/>
            <person name="Grishin N.V."/>
            <person name="Xiao G."/>
            <person name="Eskelinen E.L."/>
            <person name="Scherer P.E."/>
            <person name="Whistler J.L."/>
            <person name="Levine B."/>
        </authorList>
    </citation>
    <scope>FUNCTION</scope>
    <scope>INTERACTION WITH BECN2</scope>
</reference>
<name>GASP1_MOUSE</name>
<comment type="function">
    <text evidence="5">Modulates lysosomal sorting and functional down-regulation of a variety of G-protein coupled receptors. Targets receptors for degradation in lysosomes via its interaction with BECN2.</text>
</comment>
<comment type="subunit">
    <text evidence="1 5">Interacts with cytoplasmic tails of a variety of G-protein coupled receptors such as delta opioid receptor/OPRD1, beta-2 adrenergic receptor/ADRB2 and D4 dopamine receptor/DRD4 as well as D2 dopamine receptor/DRD2. Interacts with PER1 (By similarity). Interacts with BECN2; the interaction is direct.</text>
</comment>
<comment type="subcellular location">
    <subcellularLocation>
        <location evidence="1">Cytoplasm</location>
    </subcellularLocation>
</comment>
<comment type="alternative products">
    <event type="alternative splicing"/>
    <isoform>
        <id>Q5U4C1-1</id>
        <name>1</name>
        <sequence type="displayed"/>
    </isoform>
    <isoform>
        <id>Q5U4C1-2</id>
        <name>2</name>
        <sequence type="described" ref="VSP_019080"/>
    </isoform>
</comment>
<comment type="tissue specificity">
    <text evidence="4">Expressed in the brain, with higher expression in the hippocampus, hypothalamus and olfactory bulb.</text>
</comment>
<comment type="similarity">
    <text evidence="7">Belongs to the GPRASP family.</text>
</comment>
<comment type="sequence caution" evidence="7">
    <conflict type="erroneous initiation">
        <sequence resource="EMBL-CDS" id="BAC41425"/>
    </conflict>
</comment>
<sequence length="1347" mass="151745">MTRAEVEPGAQAKAENKPGDENANAAEVEPEAPLVVRPKVRTQIMTGARPKVKPKGTPGARPKGETSTPGGAYAKCKPKAIPIARSKHDAQVWAPNKFRGESMSKMGKQCQISAADPPLLSNDSGMVAQAKCLPVDRELANMDTESIPKKANSPAGFQPSYGSEEGTNMGSWYRARPVPKGEAYENSDFKWADKPSGSPSFWNRDEASTRFRPRKSMKANNRFRHMAKQEANTMPRHKNKQEFYNISSSDSEDESGKTPWFWPKDKTKVWSKPKEEPNSRSWFRSKKEVRVESTSGSECENPTKSLFWSGEEAKSRSKPRARKGVNMRARQQAKREACSDAMSGAIDTNKKESWFLPEEKANVFSKSKTKKEPRTRAVPKEEVKTKARASTKQEARPEEEVLVGAWFWDTQESTMADRISIKTTFVEEEPIVGDWFWSEEEASVDSETCHTSRPRAKEEQVSSFCLGSGKKSSMESGPKATSKSMPVAKEDEVVIGSWFWADDEEINLQADDESIFGSWFWGTGENSLRSVGVNCEKMPKAGEKEVTDSWFWAGDVNTEAEVEEQARSASTKATIFVPWFWSEKQPNMDLGSEPCSDIMAGAEEEPIIGPWFWAKVDNSVEAEVNSKSSLEDEEEPIRSPWFGAREQTDMKYAAGIRYKPMAEAEDANKKSCVWAKEPCLYPTNRECLKSTLGEKEDTVDPWLWSNNYPRTKTITGSWLWAAEEGNIDDETGEKIKLPTLEDNAFNSWFWKENEESIVEAPKREEFRPEAEEEDIIGSWFWAGDEDRFEPAAKINEENKIASEDEDTVGSWFWGNEEASLEAVRRGTFESAPGIKEEKVTGSWFWTDKAKVGAGSQTVETGSETEEEAIFESLIWAAKKDSIQAGVKRVSKPKDDGNIAVGSWLWSSDKATKEAKTLIVSEASPENGKESVVKFGSRAKDEVINKTGSGDNCKHSTEAETIVGAWFWEGDEASFESNPVPVCKAVCEPESSAEHEPDPSRRPQSWDEVTVQFKAGPWGKAGFPPMNPFRFPKEAASLFAEMFGGKPKLVEVGPEREPEPQFPFQYDPSYRSVREIREHLKARESAQPENWSCNCIQCELRIGSEEFEELLLLMDRNRDPFIHEISKIAMGMRGASQFTRDFIRNSGVVSLIEALLNYPSSRVRTRFLENMVRMAPPYPDLNMIETYVCQICEDTFDYDLDSPDQLSGLTMITHLTATSDYHKVVVNYLAGFFYLLNSGNTKTRFHVLKLLLNLSENLVMTKRLLVTDSVSEFMDLINREESDENIQIVLAIFETISKHIQKEALFSDDDDDDEEEDAVNLEPFISAFREAEKIAKELKRKPGNQKAP</sequence>
<keyword id="KW-0025">Alternative splicing</keyword>
<keyword id="KW-0963">Cytoplasm</keyword>
<keyword id="KW-0597">Phosphoprotein</keyword>
<keyword id="KW-1185">Reference proteome</keyword>
<evidence type="ECO:0000250" key="1"/>
<evidence type="ECO:0000250" key="2">
    <source>
        <dbReference type="UniProtKB" id="Q920R4"/>
    </source>
</evidence>
<evidence type="ECO:0000256" key="3">
    <source>
        <dbReference type="SAM" id="MobiDB-lite"/>
    </source>
</evidence>
<evidence type="ECO:0000269" key="4">
    <source>
    </source>
</evidence>
<evidence type="ECO:0000269" key="5">
    <source>
    </source>
</evidence>
<evidence type="ECO:0000303" key="6">
    <source>
    </source>
</evidence>
<evidence type="ECO:0000305" key="7"/>
<evidence type="ECO:0007744" key="8">
    <source>
    </source>
</evidence>
<dbReference type="EMBL" id="AB093241">
    <property type="protein sequence ID" value="BAC41425.1"/>
    <property type="status" value="ALT_INIT"/>
    <property type="molecule type" value="mRNA"/>
</dbReference>
<dbReference type="EMBL" id="AL683822">
    <property type="status" value="NOT_ANNOTATED_CDS"/>
    <property type="molecule type" value="Genomic_DNA"/>
</dbReference>
<dbReference type="EMBL" id="BC027187">
    <property type="protein sequence ID" value="AAH27187.1"/>
    <property type="molecule type" value="mRNA"/>
</dbReference>
<dbReference type="EMBL" id="BC085157">
    <property type="protein sequence ID" value="AAH85157.1"/>
    <property type="molecule type" value="mRNA"/>
</dbReference>
<dbReference type="EMBL" id="AK039156">
    <property type="protein sequence ID" value="BAC30259.1"/>
    <property type="molecule type" value="mRNA"/>
</dbReference>
<dbReference type="EMBL" id="AK050919">
    <property type="protein sequence ID" value="BAC34459.2"/>
    <property type="molecule type" value="mRNA"/>
</dbReference>
<dbReference type="EMBL" id="AK083192">
    <property type="protein sequence ID" value="BAC38803.1"/>
    <property type="molecule type" value="mRNA"/>
</dbReference>
<dbReference type="CCDS" id="CCDS30409.1">
    <molecule id="Q5U4C1-1"/>
</dbReference>
<dbReference type="RefSeq" id="NP_001004359.1">
    <molecule id="Q5U4C1-1"/>
    <property type="nucleotide sequence ID" value="NM_001004359.2"/>
</dbReference>
<dbReference type="RefSeq" id="NP_001005385.1">
    <molecule id="Q5U4C1-1"/>
    <property type="nucleotide sequence ID" value="NM_001005385.1"/>
</dbReference>
<dbReference type="RefSeq" id="NP_080357.4">
    <molecule id="Q5U4C1-1"/>
    <property type="nucleotide sequence ID" value="NM_026081.5"/>
</dbReference>
<dbReference type="BioGRID" id="212084">
    <property type="interactions" value="9"/>
</dbReference>
<dbReference type="FunCoup" id="Q5U4C1">
    <property type="interactions" value="340"/>
</dbReference>
<dbReference type="IntAct" id="Q5U4C1">
    <property type="interactions" value="2"/>
</dbReference>
<dbReference type="STRING" id="10090.ENSMUSP00000108769"/>
<dbReference type="GlyGen" id="Q5U4C1">
    <property type="glycosylation" value="1 site"/>
</dbReference>
<dbReference type="iPTMnet" id="Q5U4C1"/>
<dbReference type="PhosphoSitePlus" id="Q5U4C1"/>
<dbReference type="jPOST" id="Q5U4C1"/>
<dbReference type="PaxDb" id="10090-ENSMUSP00000108769"/>
<dbReference type="PeptideAtlas" id="Q5U4C1"/>
<dbReference type="ProteomicsDB" id="271633">
    <molecule id="Q5U4C1-1"/>
</dbReference>
<dbReference type="ProteomicsDB" id="271634">
    <molecule id="Q5U4C1-2"/>
</dbReference>
<dbReference type="Antibodypedia" id="383">
    <property type="antibodies" value="130 antibodies from 29 providers"/>
</dbReference>
<dbReference type="DNASU" id="67298"/>
<dbReference type="Ensembl" id="ENSMUST00000113144.8">
    <molecule id="Q5U4C1-1"/>
    <property type="protein sequence ID" value="ENSMUSP00000108769.2"/>
    <property type="gene ID" value="ENSMUSG00000043384.16"/>
</dbReference>
<dbReference type="Ensembl" id="ENSMUST00000113145.8">
    <molecule id="Q5U4C1-1"/>
    <property type="protein sequence ID" value="ENSMUSP00000108770.2"/>
    <property type="gene ID" value="ENSMUSG00000043384.16"/>
</dbReference>
<dbReference type="Ensembl" id="ENSMUST00000113147.8">
    <molecule id="Q5U4C1-1"/>
    <property type="protein sequence ID" value="ENSMUSP00000108772.2"/>
    <property type="gene ID" value="ENSMUSG00000043384.16"/>
</dbReference>
<dbReference type="Ensembl" id="ENSMUST00000166554.2">
    <molecule id="Q5U4C1-1"/>
    <property type="protein sequence ID" value="ENSMUSP00000132225.2"/>
    <property type="gene ID" value="ENSMUSG00000043384.16"/>
</dbReference>
<dbReference type="GeneID" id="67298"/>
<dbReference type="KEGG" id="mmu:67298"/>
<dbReference type="UCSC" id="uc009uhn.1">
    <molecule id="Q5U4C1-1"/>
    <property type="organism name" value="mouse"/>
</dbReference>
<dbReference type="AGR" id="MGI:1917418"/>
<dbReference type="CTD" id="9737"/>
<dbReference type="MGI" id="MGI:1917418">
    <property type="gene designation" value="Gprasp1"/>
</dbReference>
<dbReference type="VEuPathDB" id="HostDB:ENSMUSG00000043384"/>
<dbReference type="eggNOG" id="ENOG502S6CE">
    <property type="taxonomic scope" value="Eukaryota"/>
</dbReference>
<dbReference type="GeneTree" id="ENSGT00940000163396"/>
<dbReference type="HOGENOM" id="CLU_008490_0_0_1"/>
<dbReference type="InParanoid" id="Q5U4C1"/>
<dbReference type="OMA" id="WFWATEE"/>
<dbReference type="OrthoDB" id="9664939at2759"/>
<dbReference type="PhylomeDB" id="Q5U4C1"/>
<dbReference type="TreeFam" id="TF335652"/>
<dbReference type="BioGRID-ORCS" id="67298">
    <property type="hits" value="2 hits in 78 CRISPR screens"/>
</dbReference>
<dbReference type="ChiTaRS" id="Gprasp1">
    <property type="organism name" value="mouse"/>
</dbReference>
<dbReference type="PRO" id="PR:Q5U4C1"/>
<dbReference type="Proteomes" id="UP000000589">
    <property type="component" value="Chromosome X"/>
</dbReference>
<dbReference type="RNAct" id="Q5U4C1">
    <property type="molecule type" value="protein"/>
</dbReference>
<dbReference type="Bgee" id="ENSMUSG00000043384">
    <property type="expression patterns" value="Expressed in central gray substance of midbrain and 247 other cell types or tissues"/>
</dbReference>
<dbReference type="GO" id="GO:0005829">
    <property type="term" value="C:cytosol"/>
    <property type="evidence" value="ECO:0007669"/>
    <property type="project" value="Ensembl"/>
</dbReference>
<dbReference type="GO" id="GO:0008333">
    <property type="term" value="P:endosome to lysosome transport"/>
    <property type="evidence" value="ECO:0000250"/>
    <property type="project" value="UniProtKB"/>
</dbReference>
<dbReference type="GO" id="GO:1990172">
    <property type="term" value="P:G protein-coupled receptor catabolic process"/>
    <property type="evidence" value="ECO:0000250"/>
    <property type="project" value="UniProtKB"/>
</dbReference>
<dbReference type="InterPro" id="IPR006911">
    <property type="entry name" value="ARM-rpt_dom"/>
</dbReference>
<dbReference type="InterPro" id="IPR016024">
    <property type="entry name" value="ARM-type_fold"/>
</dbReference>
<dbReference type="InterPro" id="IPR043374">
    <property type="entry name" value="GASP1-3"/>
</dbReference>
<dbReference type="PANTHER" id="PTHR46414:SF3">
    <property type="entry name" value="G-PROTEIN COUPLED RECEPTOR-ASSOCIATED SORTING PROTEIN 1"/>
    <property type="match status" value="1"/>
</dbReference>
<dbReference type="PANTHER" id="PTHR46414">
    <property type="entry name" value="PROTEIN BHLHB9-RELATED"/>
    <property type="match status" value="1"/>
</dbReference>
<dbReference type="Pfam" id="PF04826">
    <property type="entry name" value="Arm_2"/>
    <property type="match status" value="1"/>
</dbReference>
<dbReference type="SUPFAM" id="SSF48371">
    <property type="entry name" value="ARM repeat"/>
    <property type="match status" value="1"/>
</dbReference>
<feature type="chain" id="PRO_0000239051" description="G-protein coupled receptor-associated sorting protein 1">
    <location>
        <begin position="1"/>
        <end position="1347"/>
    </location>
</feature>
<feature type="region of interest" description="Disordered" evidence="3">
    <location>
        <begin position="1"/>
        <end position="75"/>
    </location>
</feature>
<feature type="region of interest" description="Disordered" evidence="3">
    <location>
        <begin position="145"/>
        <end position="174"/>
    </location>
</feature>
<feature type="region of interest" description="Disordered" evidence="3">
    <location>
        <begin position="188"/>
        <end position="281"/>
    </location>
</feature>
<feature type="region of interest" description="Disordered" evidence="3">
    <location>
        <begin position="310"/>
        <end position="344"/>
    </location>
</feature>
<feature type="region of interest" description="Disordered" evidence="3">
    <location>
        <begin position="364"/>
        <end position="396"/>
    </location>
</feature>
<feature type="region of interest" description="Disordered" evidence="3">
    <location>
        <begin position="460"/>
        <end position="485"/>
    </location>
</feature>
<feature type="compositionally biased region" description="Low complexity" evidence="3">
    <location>
        <begin position="21"/>
        <end position="33"/>
    </location>
</feature>
<feature type="compositionally biased region" description="Basic residues" evidence="3">
    <location>
        <begin position="211"/>
        <end position="226"/>
    </location>
</feature>
<feature type="compositionally biased region" description="Basic and acidic residues" evidence="3">
    <location>
        <begin position="263"/>
        <end position="278"/>
    </location>
</feature>
<feature type="compositionally biased region" description="Basic residues" evidence="3">
    <location>
        <begin position="316"/>
        <end position="325"/>
    </location>
</feature>
<feature type="compositionally biased region" description="Basic and acidic residues" evidence="3">
    <location>
        <begin position="370"/>
        <end position="396"/>
    </location>
</feature>
<feature type="compositionally biased region" description="Polar residues" evidence="3">
    <location>
        <begin position="461"/>
        <end position="484"/>
    </location>
</feature>
<feature type="modified residue" description="Phosphoserine" evidence="8">
    <location>
        <position position="295"/>
    </location>
</feature>
<feature type="modified residue" description="Phosphoserine" evidence="8">
    <location>
        <position position="619"/>
    </location>
</feature>
<feature type="modified residue" description="Phosphoserine" evidence="8">
    <location>
        <position position="626"/>
    </location>
</feature>
<feature type="modified residue" description="Phosphothreonine" evidence="2">
    <location>
        <position position="860"/>
    </location>
</feature>
<feature type="modified residue" description="Phosphoserine" evidence="2">
    <location>
        <position position="862"/>
    </location>
</feature>
<feature type="splice variant" id="VSP_019080" description="In isoform 2." evidence="6">
    <location>
        <begin position="1"/>
        <end position="473"/>
    </location>
</feature>
<feature type="sequence conflict" description="In Ref. 1; BAC41425." evidence="7" ref="1">
    <original>V</original>
    <variation>L</variation>
    <location>
        <position position="942"/>
    </location>
</feature>
<feature type="sequence conflict" description="In Ref. 4; BAC30259." evidence="7" ref="4">
    <original>I</original>
    <variation>F</variation>
    <location>
        <position position="943"/>
    </location>
</feature>
<gene>
    <name type="primary">Gprasp1</name>
    <name type="synonym">Kiaa0443</name>
</gene>
<proteinExistence type="evidence at protein level"/>
<accession>Q5U4C1</accession>
<accession>A2AGB6</accession>
<accession>Q8BKR8</accession>
<accession>Q8BUN4</accession>
<accession>Q8BYK9</accession>
<accession>Q8CHF4</accession>
<accession>Q8R095</accession>
<protein>
    <recommendedName>
        <fullName>G-protein coupled receptor-associated sorting protein 1</fullName>
        <shortName>GASP-1</shortName>
    </recommendedName>
</protein>
<organism>
    <name type="scientific">Mus musculus</name>
    <name type="common">Mouse</name>
    <dbReference type="NCBI Taxonomy" id="10090"/>
    <lineage>
        <taxon>Eukaryota</taxon>
        <taxon>Metazoa</taxon>
        <taxon>Chordata</taxon>
        <taxon>Craniata</taxon>
        <taxon>Vertebrata</taxon>
        <taxon>Euteleostomi</taxon>
        <taxon>Mammalia</taxon>
        <taxon>Eutheria</taxon>
        <taxon>Euarchontoglires</taxon>
        <taxon>Glires</taxon>
        <taxon>Rodentia</taxon>
        <taxon>Myomorpha</taxon>
        <taxon>Muroidea</taxon>
        <taxon>Muridae</taxon>
        <taxon>Murinae</taxon>
        <taxon>Mus</taxon>
        <taxon>Mus</taxon>
    </lineage>
</organism>